<accession>Q04329</accession>
<accession>D6W020</accession>
<dbReference type="EMBL" id="Z47815">
    <property type="protein sequence ID" value="CAA87817.1"/>
    <property type="molecule type" value="Genomic_DNA"/>
</dbReference>
<dbReference type="EMBL" id="AY557963">
    <property type="protein sequence ID" value="AAS56289.1"/>
    <property type="molecule type" value="Genomic_DNA"/>
</dbReference>
<dbReference type="EMBL" id="BK006946">
    <property type="protein sequence ID" value="DAA10094.1"/>
    <property type="molecule type" value="Genomic_DNA"/>
</dbReference>
<dbReference type="PIR" id="S50924">
    <property type="entry name" value="S50924"/>
</dbReference>
<dbReference type="RefSeq" id="NP_013922.1">
    <property type="nucleotide sequence ID" value="NM_001182702.1"/>
</dbReference>
<dbReference type="BioGRID" id="35373">
    <property type="interactions" value="56"/>
</dbReference>
<dbReference type="DIP" id="DIP-4170N"/>
<dbReference type="FunCoup" id="Q04329">
    <property type="interactions" value="77"/>
</dbReference>
<dbReference type="IntAct" id="Q04329">
    <property type="interactions" value="2"/>
</dbReference>
<dbReference type="MINT" id="Q04329"/>
<dbReference type="STRING" id="4932.YMR195W"/>
<dbReference type="PaxDb" id="4932-YMR195W"/>
<dbReference type="PeptideAtlas" id="Q04329"/>
<dbReference type="EnsemblFungi" id="YMR195W_mRNA">
    <property type="protein sequence ID" value="YMR195W"/>
    <property type="gene ID" value="YMR195W"/>
</dbReference>
<dbReference type="GeneID" id="855235"/>
<dbReference type="KEGG" id="sce:YMR195W"/>
<dbReference type="AGR" id="SGD:S000004808"/>
<dbReference type="SGD" id="S000004808">
    <property type="gene designation" value="ICY1"/>
</dbReference>
<dbReference type="VEuPathDB" id="FungiDB:YMR195W"/>
<dbReference type="HOGENOM" id="CLU_149528_0_0_1"/>
<dbReference type="InParanoid" id="Q04329"/>
<dbReference type="OMA" id="DCRMAVA"/>
<dbReference type="OrthoDB" id="4033322at2759"/>
<dbReference type="BioCyc" id="YEAST:G3O-32882-MONOMER"/>
<dbReference type="BioGRID-ORCS" id="855235">
    <property type="hits" value="1 hit in 10 CRISPR screens"/>
</dbReference>
<dbReference type="PRO" id="PR:Q04329"/>
<dbReference type="Proteomes" id="UP000002311">
    <property type="component" value="Chromosome XIII"/>
</dbReference>
<dbReference type="RNAct" id="Q04329">
    <property type="molecule type" value="protein"/>
</dbReference>
<dbReference type="GO" id="GO:0000329">
    <property type="term" value="C:fungal-type vacuole membrane"/>
    <property type="evidence" value="ECO:0007005"/>
    <property type="project" value="SGD"/>
</dbReference>
<feature type="chain" id="PRO_0000203325" description="Interacting with cytoskeleton protein 1">
    <location>
        <begin position="1"/>
        <end position="127"/>
    </location>
</feature>
<keyword id="KW-0472">Membrane</keyword>
<keyword id="KW-1185">Reference proteome</keyword>
<keyword id="KW-0926">Vacuole</keyword>
<organism>
    <name type="scientific">Saccharomyces cerevisiae (strain ATCC 204508 / S288c)</name>
    <name type="common">Baker's yeast</name>
    <dbReference type="NCBI Taxonomy" id="559292"/>
    <lineage>
        <taxon>Eukaryota</taxon>
        <taxon>Fungi</taxon>
        <taxon>Dikarya</taxon>
        <taxon>Ascomycota</taxon>
        <taxon>Saccharomycotina</taxon>
        <taxon>Saccharomycetes</taxon>
        <taxon>Saccharomycetales</taxon>
        <taxon>Saccharomycetaceae</taxon>
        <taxon>Saccharomyces</taxon>
    </lineage>
</organism>
<reference key="1">
    <citation type="journal article" date="1997" name="Nature">
        <title>The nucleotide sequence of Saccharomyces cerevisiae chromosome XIII.</title>
        <authorList>
            <person name="Bowman S."/>
            <person name="Churcher C.M."/>
            <person name="Badcock K."/>
            <person name="Brown D."/>
            <person name="Chillingworth T."/>
            <person name="Connor R."/>
            <person name="Dedman K."/>
            <person name="Devlin K."/>
            <person name="Gentles S."/>
            <person name="Hamlin N."/>
            <person name="Hunt S."/>
            <person name="Jagels K."/>
            <person name="Lye G."/>
            <person name="Moule S."/>
            <person name="Odell C."/>
            <person name="Pearson D."/>
            <person name="Rajandream M.A."/>
            <person name="Rice P."/>
            <person name="Skelton J."/>
            <person name="Walsh S.V."/>
            <person name="Whitehead S."/>
            <person name="Barrell B.G."/>
        </authorList>
    </citation>
    <scope>NUCLEOTIDE SEQUENCE [LARGE SCALE GENOMIC DNA]</scope>
    <source>
        <strain>ATCC 204508 / S288c</strain>
    </source>
</reference>
<reference key="2">
    <citation type="journal article" date="2014" name="G3 (Bethesda)">
        <title>The reference genome sequence of Saccharomyces cerevisiae: Then and now.</title>
        <authorList>
            <person name="Engel S.R."/>
            <person name="Dietrich F.S."/>
            <person name="Fisk D.G."/>
            <person name="Binkley G."/>
            <person name="Balakrishnan R."/>
            <person name="Costanzo M.C."/>
            <person name="Dwight S.S."/>
            <person name="Hitz B.C."/>
            <person name="Karra K."/>
            <person name="Nash R.S."/>
            <person name="Weng S."/>
            <person name="Wong E.D."/>
            <person name="Lloyd P."/>
            <person name="Skrzypek M.S."/>
            <person name="Miyasato S.R."/>
            <person name="Simison M."/>
            <person name="Cherry J.M."/>
        </authorList>
    </citation>
    <scope>GENOME REANNOTATION</scope>
    <source>
        <strain>ATCC 204508 / S288c</strain>
    </source>
</reference>
<reference key="3">
    <citation type="journal article" date="2007" name="Genome Res.">
        <title>Approaching a complete repository of sequence-verified protein-encoding clones for Saccharomyces cerevisiae.</title>
        <authorList>
            <person name="Hu Y."/>
            <person name="Rolfs A."/>
            <person name="Bhullar B."/>
            <person name="Murthy T.V.S."/>
            <person name="Zhu C."/>
            <person name="Berger M.F."/>
            <person name="Camargo A.A."/>
            <person name="Kelley F."/>
            <person name="McCarron S."/>
            <person name="Jepson D."/>
            <person name="Richardson A."/>
            <person name="Raphael J."/>
            <person name="Moreira D."/>
            <person name="Taycher E."/>
            <person name="Zuo D."/>
            <person name="Mohr S."/>
            <person name="Kane M.F."/>
            <person name="Williamson J."/>
            <person name="Simpson A.J.G."/>
            <person name="Bulyk M.L."/>
            <person name="Harlow E."/>
            <person name="Marsischky G."/>
            <person name="Kolodner R.D."/>
            <person name="LaBaer J."/>
        </authorList>
    </citation>
    <scope>NUCLEOTIDE SEQUENCE [GENOMIC DNA]</scope>
    <source>
        <strain>ATCC 204508 / S288c</strain>
    </source>
</reference>
<reference key="4">
    <citation type="journal article" date="2003" name="Genetics">
        <title>Suppression of a defect in mitochondrial protein import identifies cytosolic proteins required for viability of yeast cells lacking mitochondrial DNA.</title>
        <authorList>
            <person name="Dunn C.D."/>
            <person name="Jensen R.E."/>
        </authorList>
    </citation>
    <scope>FUNCTION</scope>
</reference>
<reference key="5">
    <citation type="journal article" date="2003" name="Nature">
        <title>Global analysis of protein localization in budding yeast.</title>
        <authorList>
            <person name="Huh W.-K."/>
            <person name="Falvo J.V."/>
            <person name="Gerke L.C."/>
            <person name="Carroll A.S."/>
            <person name="Howson R.W."/>
            <person name="Weissman J.S."/>
            <person name="O'Shea E.K."/>
        </authorList>
    </citation>
    <scope>SUBCELLULAR LOCATION [LARGE SCALE ANALYSIS]</scope>
</reference>
<reference key="6">
    <citation type="journal article" date="2003" name="Yeast">
        <title>Screening and characterization of transposon-insertion mutants in a pseudohyphal strain of Saccharomyces cerevisiae.</title>
        <authorList>
            <person name="Suzuki C."/>
            <person name="Hori Y."/>
            <person name="Kashiwagi Y."/>
        </authorList>
    </citation>
    <scope>DISRUPTION PHENOTYPE</scope>
</reference>
<reference key="7">
    <citation type="journal article" date="2003" name="Nature">
        <title>Global analysis of protein expression in yeast.</title>
        <authorList>
            <person name="Ghaemmaghami S."/>
            <person name="Huh W.-K."/>
            <person name="Bower K."/>
            <person name="Howson R.W."/>
            <person name="Belle A."/>
            <person name="Dephoure N."/>
            <person name="O'Shea E.K."/>
            <person name="Weissman J.S."/>
        </authorList>
    </citation>
    <scope>LEVEL OF PROTEIN EXPRESSION [LARGE SCALE ANALYSIS]</scope>
</reference>
<reference key="8">
    <citation type="journal article" date="2005" name="Mol. Genet. Genomics">
        <title>Transcriptional profiling of Saccharomyces cerevisiae cells under adhesion-inducing conditions.</title>
        <authorList>
            <person name="Kleinschmidt M."/>
            <person name="Grundmann O."/>
            <person name="Bluethgen N."/>
            <person name="Moesch H.-U."/>
            <person name="Braus G.H."/>
        </authorList>
    </citation>
    <scope>INDUCTION</scope>
</reference>
<protein>
    <recommendedName>
        <fullName>Interacting with cytoskeleton protein 1</fullName>
    </recommendedName>
</protein>
<sequence>MSSNYATPLDDEVFPLSFANYQFTEHVSLGEHYSLNTSEDAKYNNLNGPFVVPRDTGKFDLNTSSASDETVFSLDNPQENNYKHQAMNNVQDCRMAVAAKTTQSCDKLTDLYANAAQQNYRLWLSSF</sequence>
<gene>
    <name type="primary">ICY1</name>
    <name type="ordered locus">YMR195W</name>
    <name type="ORF">YM9646.08</name>
</gene>
<comment type="function">
    <text evidence="2">Required for viability of cells lacking mtDNA.</text>
</comment>
<comment type="subcellular location">
    <subcellularLocation>
        <location evidence="3">Vacuole membrane</location>
        <topology evidence="3">Peripheral membrane protein</topology>
    </subcellularLocation>
</comment>
<comment type="induction">
    <text evidence="5">Induced by amino acids starvation.</text>
</comment>
<comment type="disruption phenotype">
    <text evidence="1">Invasive growth defect with elongated cell morphology.</text>
</comment>
<comment type="miscellaneous">
    <text evidence="4">Present with 4050 molecules/cell in log phase SD medium.</text>
</comment>
<evidence type="ECO:0000269" key="1">
    <source>
    </source>
</evidence>
<evidence type="ECO:0000269" key="2">
    <source>
    </source>
</evidence>
<evidence type="ECO:0000269" key="3">
    <source>
    </source>
</evidence>
<evidence type="ECO:0000269" key="4">
    <source>
    </source>
</evidence>
<evidence type="ECO:0000269" key="5">
    <source>
    </source>
</evidence>
<name>ICY1_YEAST</name>
<proteinExistence type="evidence at protein level"/>